<accession>Q4WC55</accession>
<proteinExistence type="inferred from homology"/>
<protein>
    <recommendedName>
        <fullName>Myosin-1</fullName>
    </recommendedName>
    <alternativeName>
        <fullName>Class I unconventional myosin</fullName>
    </alternativeName>
    <alternativeName>
        <fullName>Type I myosin</fullName>
    </alternativeName>
</protein>
<reference key="1">
    <citation type="journal article" date="2005" name="Nature">
        <title>Genomic sequence of the pathogenic and allergenic filamentous fungus Aspergillus fumigatus.</title>
        <authorList>
            <person name="Nierman W.C."/>
            <person name="Pain A."/>
            <person name="Anderson M.J."/>
            <person name="Wortman J.R."/>
            <person name="Kim H.S."/>
            <person name="Arroyo J."/>
            <person name="Berriman M."/>
            <person name="Abe K."/>
            <person name="Archer D.B."/>
            <person name="Bermejo C."/>
            <person name="Bennett J.W."/>
            <person name="Bowyer P."/>
            <person name="Chen D."/>
            <person name="Collins M."/>
            <person name="Coulsen R."/>
            <person name="Davies R."/>
            <person name="Dyer P.S."/>
            <person name="Farman M.L."/>
            <person name="Fedorova N."/>
            <person name="Fedorova N.D."/>
            <person name="Feldblyum T.V."/>
            <person name="Fischer R."/>
            <person name="Fosker N."/>
            <person name="Fraser A."/>
            <person name="Garcia J.L."/>
            <person name="Garcia M.J."/>
            <person name="Goble A."/>
            <person name="Goldman G.H."/>
            <person name="Gomi K."/>
            <person name="Griffith-Jones S."/>
            <person name="Gwilliam R."/>
            <person name="Haas B.J."/>
            <person name="Haas H."/>
            <person name="Harris D.E."/>
            <person name="Horiuchi H."/>
            <person name="Huang J."/>
            <person name="Humphray S."/>
            <person name="Jimenez J."/>
            <person name="Keller N."/>
            <person name="Khouri H."/>
            <person name="Kitamoto K."/>
            <person name="Kobayashi T."/>
            <person name="Konzack S."/>
            <person name="Kulkarni R."/>
            <person name="Kumagai T."/>
            <person name="Lafton A."/>
            <person name="Latge J.-P."/>
            <person name="Li W."/>
            <person name="Lord A."/>
            <person name="Lu C."/>
            <person name="Majoros W.H."/>
            <person name="May G.S."/>
            <person name="Miller B.L."/>
            <person name="Mohamoud Y."/>
            <person name="Molina M."/>
            <person name="Monod M."/>
            <person name="Mouyna I."/>
            <person name="Mulligan S."/>
            <person name="Murphy L.D."/>
            <person name="O'Neil S."/>
            <person name="Paulsen I."/>
            <person name="Penalva M.A."/>
            <person name="Pertea M."/>
            <person name="Price C."/>
            <person name="Pritchard B.L."/>
            <person name="Quail M.A."/>
            <person name="Rabbinowitsch E."/>
            <person name="Rawlins N."/>
            <person name="Rajandream M.A."/>
            <person name="Reichard U."/>
            <person name="Renauld H."/>
            <person name="Robson G.D."/>
            <person name="Rodriguez de Cordoba S."/>
            <person name="Rodriguez-Pena J.M."/>
            <person name="Ronning C.M."/>
            <person name="Rutter S."/>
            <person name="Salzberg S.L."/>
            <person name="Sanchez M."/>
            <person name="Sanchez-Ferrero J.C."/>
            <person name="Saunders D."/>
            <person name="Seeger K."/>
            <person name="Squares R."/>
            <person name="Squares S."/>
            <person name="Takeuchi M."/>
            <person name="Tekaia F."/>
            <person name="Turner G."/>
            <person name="Vazquez de Aldana C.R."/>
            <person name="Weidman J."/>
            <person name="White O."/>
            <person name="Woodward J.R."/>
            <person name="Yu J.-H."/>
            <person name="Fraser C.M."/>
            <person name="Galagan J.E."/>
            <person name="Asai K."/>
            <person name="Machida M."/>
            <person name="Hall N."/>
            <person name="Barrell B.G."/>
            <person name="Denning D.W."/>
        </authorList>
    </citation>
    <scope>NUCLEOTIDE SEQUENCE [LARGE SCALE GENOMIC DNA]</scope>
    <source>
        <strain>ATCC MYA-4609 / CBS 101355 / FGSC A1100 / Af293</strain>
    </source>
</reference>
<sequence length="1249" mass="137289">MGHSRRPAGGEKKSRGFGRSKAVADVGDGRQTGGKPQVKKATFESTKKKEIGVSDLTLLSKISNEAINDNLKLRFEHDEIYTYIGHVLVSVNPFRDLGIYTDNVLQSYRGKNRLEVPPHVFAVAESAYYNMKSYKDNQCVIISGESGAGKTEAAKRIMQYIASVSGGTDSSIQHTKDMVLATNPLLESFGNAKTLRNNNSSRFGKYLELEFNTNGEPVGANITNYLLEKSRVVGQITNERNFHIFYQFTKAAPQKYRDLFGIQQPQSYLYTSRSKCFDVPGVDDSAEFRDTLNAMNVIGMTEGEQDEVFRMLAAILWIGNVQFAEDDSGNAVITDQSVVDYVAYLLEVDAAQVNKAFTIRVMETARGGRRGSVYEVPLNTVQALAVRDALAKAIYFNLFDWIVQRVNASLTARGEVANSIGILDIYGFEIFEKNSFEQLCINYVNEKLQQIFIQLTLKAEQDEYAREQIQWTPIKYFDNKVVCSLIEDKRPPGVFAALNDACATAHADSSAADNTFVGRLNFLSQNPNFENRQGQFIIKHYAGDVSYAVAGMTDKNKDQLLKDLLNLVGTSGNQFVHTLFPEQVNQDDKRRPPTASDKIKASANDLVATLMKAQPSYIRTIKPNDNKAPREYNVGNVLHQIKYLGLQENVRIRRAGFAYRQTFDKFVERFYLLSPKTSYAGDYTWTGDAESGARQILKDTSIPAEEYQMGITKVFVKTPETLFALEAMRDRYWHNMAIRIQRAWRNYLRYRTECAIRIQRFWRRTTGGLEFIKLRDQGHQLLNGRKERRRMSLLGSRRFLGDYIGVGNKGGPGEMVRNGAGISGSEEILFSCRGEVLVSKFGRSSKPAPRILALTNRHVYIIAQNLVNNQLVISSERTIPIGAIKAVGASNLKDDWFSIVVGSPQEPDPLVNCVFKTEFFTHLNNALRGQLNLKIADHIEYNKKPGKLATVKVVKDPAVARDDSYKSGTIHTGPGEPANSVSKPTPRPKQVSARPVTKGKLLRPGGPGGGPSKLAARPTPAAQPLPRATPQPAEPQPAARAVPQPVAAVAASHTRTGSTASVRAPPPPPPAAAPAPKKPTAKVLYDFNSQQSNELSIKAGEIVQIVSKEGNGWWLCMNMTTSAQGWTPEAYLEEQVAPTPKPAPPPPPAAPRSTPAPATNGAAAAAKAKPAPPAPPAKRPNMAARKAVPTPPPAPRDSAVSMNSHDSSGGSGRGTPNSMSNASLAGGLAEALRARQHAMQGKQDDDDDW</sequence>
<comment type="function">
    <text evidence="1">Type-I myosin implicated in the organization of the actin cytoskeleton. Required for proper actin cytoskeleton polarization. At the cell cortex, assembles in patch-like structures together with proteins from the actin-polymerizing machinery and promotes actin assembly. Functions as actin nucleation-promoting factor (NPF) for the Arp2/3 complex. Plays an important role in polarized growth, spore germination, hyphal morphogenesis, and septal wall formation (By similarity).</text>
</comment>
<comment type="subcellular location">
    <subcellularLocation>
        <location evidence="1">Cytoplasm</location>
        <location evidence="1">Cytoskeleton</location>
        <location evidence="1">Actin patch</location>
    </subcellularLocation>
    <text evidence="1">Localizes to cortical patch-like structures. Enriched at sites of polarized growth, like the growing hyphal tips and sites of septum formation (By similarity).</text>
</comment>
<comment type="domain">
    <text evidence="1">The myosin motor domain displays actin-stimulated ATPase activity and generates a mechanochemical force.</text>
</comment>
<comment type="domain">
    <text evidence="1">The tail domain participates in molecular interactions that specify the role of the motor domain (By similarity). It is composed of several tail homology (TH) domains, namely a putative phospholipid-binding myosin tail domain (also named TH1), an Ala- and Pro-rich domain (TH2), followed by an SH3 domain and a C-terminal acidic domain (TH3).</text>
</comment>
<comment type="PTM">
    <text evidence="1">Phosphorylation of the TEDS site (Ser-372) is required for the polarization of the actin cytoskeleton. Phosphorylation probably activates the myosin-I ATPase activity (By similarity).</text>
</comment>
<comment type="similarity">
    <text evidence="7">Belongs to the TRAFAC class myosin-kinesin ATPase superfamily. Myosin family.</text>
</comment>
<comment type="sequence caution" evidence="7">
    <conflict type="erroneous gene model prediction">
        <sequence resource="EMBL-CDS" id="EAL85329"/>
    </conflict>
</comment>
<organism>
    <name type="scientific">Aspergillus fumigatus (strain ATCC MYA-4609 / CBS 101355 / FGSC A1100 / Af293)</name>
    <name type="common">Neosartorya fumigata</name>
    <dbReference type="NCBI Taxonomy" id="330879"/>
    <lineage>
        <taxon>Eukaryota</taxon>
        <taxon>Fungi</taxon>
        <taxon>Dikarya</taxon>
        <taxon>Ascomycota</taxon>
        <taxon>Pezizomycotina</taxon>
        <taxon>Eurotiomycetes</taxon>
        <taxon>Eurotiomycetidae</taxon>
        <taxon>Eurotiales</taxon>
        <taxon>Aspergillaceae</taxon>
        <taxon>Aspergillus</taxon>
        <taxon>Aspergillus subgen. Fumigati</taxon>
    </lineage>
</organism>
<keyword id="KW-0009">Actin-binding</keyword>
<keyword id="KW-0067">ATP-binding</keyword>
<keyword id="KW-0963">Cytoplasm</keyword>
<keyword id="KW-0206">Cytoskeleton</keyword>
<keyword id="KW-0378">Hydrolase</keyword>
<keyword id="KW-0505">Motor protein</keyword>
<keyword id="KW-0518">Myosin</keyword>
<keyword id="KW-0547">Nucleotide-binding</keyword>
<keyword id="KW-0597">Phosphoprotein</keyword>
<keyword id="KW-1185">Reference proteome</keyword>
<keyword id="KW-0677">Repeat</keyword>
<keyword id="KW-0728">SH3 domain</keyword>
<gene>
    <name type="primary">myoA</name>
    <name type="ORF">AFUA_8G05660</name>
</gene>
<name>MYO1_ASPFU</name>
<feature type="chain" id="PRO_0000338537" description="Myosin-1">
    <location>
        <begin position="1"/>
        <end position="1249"/>
    </location>
</feature>
<feature type="domain" description="Myosin motor" evidence="4">
    <location>
        <begin position="51"/>
        <end position="730"/>
    </location>
</feature>
<feature type="domain" description="IQ 1">
    <location>
        <begin position="734"/>
        <end position="754"/>
    </location>
</feature>
<feature type="domain" description="IQ 2">
    <location>
        <begin position="755"/>
        <end position="780"/>
    </location>
</feature>
<feature type="domain" description="TH1" evidence="5">
    <location>
        <begin position="788"/>
        <end position="978"/>
    </location>
</feature>
<feature type="domain" description="SH3" evidence="3">
    <location>
        <begin position="1076"/>
        <end position="1137"/>
    </location>
</feature>
<feature type="region of interest" description="Disordered" evidence="6">
    <location>
        <begin position="1"/>
        <end position="42"/>
    </location>
</feature>
<feature type="region of interest" description="Actin-binding" evidence="1">
    <location>
        <begin position="419"/>
        <end position="501"/>
    </location>
</feature>
<feature type="region of interest" description="Disordered" evidence="6">
    <location>
        <begin position="962"/>
        <end position="1079"/>
    </location>
</feature>
<feature type="region of interest" description="Disordered" evidence="6">
    <location>
        <begin position="1126"/>
        <end position="1249"/>
    </location>
</feature>
<feature type="compositionally biased region" description="Pro residues" evidence="6">
    <location>
        <begin position="1021"/>
        <end position="1035"/>
    </location>
</feature>
<feature type="compositionally biased region" description="Low complexity" evidence="6">
    <location>
        <begin position="1036"/>
        <end position="1051"/>
    </location>
</feature>
<feature type="compositionally biased region" description="Pro residues" evidence="6">
    <location>
        <begin position="1064"/>
        <end position="1077"/>
    </location>
</feature>
<feature type="compositionally biased region" description="Pro residues" evidence="6">
    <location>
        <begin position="1139"/>
        <end position="1150"/>
    </location>
</feature>
<feature type="compositionally biased region" description="Low complexity" evidence="6">
    <location>
        <begin position="1151"/>
        <end position="1169"/>
    </location>
</feature>
<feature type="compositionally biased region" description="Polar residues" evidence="6">
    <location>
        <begin position="1200"/>
        <end position="1221"/>
    </location>
</feature>
<feature type="compositionally biased region" description="Low complexity" evidence="6">
    <location>
        <begin position="1222"/>
        <end position="1231"/>
    </location>
</feature>
<feature type="binding site" evidence="2">
    <location>
        <begin position="144"/>
        <end position="151"/>
    </location>
    <ligand>
        <name>ATP</name>
        <dbReference type="ChEBI" id="CHEBI:30616"/>
    </ligand>
</feature>
<feature type="modified residue" description="Phosphoserine" evidence="1">
    <location>
        <position position="372"/>
    </location>
</feature>
<dbReference type="EMBL" id="AAHF01000013">
    <property type="protein sequence ID" value="EAL85329.1"/>
    <property type="status" value="ALT_SEQ"/>
    <property type="molecule type" value="Genomic_DNA"/>
</dbReference>
<dbReference type="RefSeq" id="XP_747367.1">
    <property type="nucleotide sequence ID" value="XM_742274.1"/>
</dbReference>
<dbReference type="SMR" id="Q4WC55"/>
<dbReference type="FunCoup" id="Q4WC55">
    <property type="interactions" value="324"/>
</dbReference>
<dbReference type="STRING" id="330879.Q4WC55"/>
<dbReference type="GeneID" id="3504691"/>
<dbReference type="KEGG" id="afm:AFUA_8G05660"/>
<dbReference type="eggNOG" id="KOG0162">
    <property type="taxonomic scope" value="Eukaryota"/>
</dbReference>
<dbReference type="HOGENOM" id="CLU_000192_7_6_1"/>
<dbReference type="InParanoid" id="Q4WC55"/>
<dbReference type="OrthoDB" id="6108017at2759"/>
<dbReference type="Proteomes" id="UP000002530">
    <property type="component" value="Chromosome 8"/>
</dbReference>
<dbReference type="GO" id="GO:0030479">
    <property type="term" value="C:actin cortical patch"/>
    <property type="evidence" value="ECO:0000318"/>
    <property type="project" value="GO_Central"/>
</dbReference>
<dbReference type="GO" id="GO:0015629">
    <property type="term" value="C:actin cytoskeleton"/>
    <property type="evidence" value="ECO:0000318"/>
    <property type="project" value="GO_Central"/>
</dbReference>
<dbReference type="GO" id="GO:0051286">
    <property type="term" value="C:cell tip"/>
    <property type="evidence" value="ECO:0000318"/>
    <property type="project" value="GO_Central"/>
</dbReference>
<dbReference type="GO" id="GO:0005737">
    <property type="term" value="C:cytoplasm"/>
    <property type="evidence" value="ECO:0000318"/>
    <property type="project" value="GO_Central"/>
</dbReference>
<dbReference type="GO" id="GO:0016459">
    <property type="term" value="C:myosin complex"/>
    <property type="evidence" value="ECO:0007669"/>
    <property type="project" value="UniProtKB-KW"/>
</dbReference>
<dbReference type="GO" id="GO:0005886">
    <property type="term" value="C:plasma membrane"/>
    <property type="evidence" value="ECO:0000318"/>
    <property type="project" value="GO_Central"/>
</dbReference>
<dbReference type="GO" id="GO:0051015">
    <property type="term" value="F:actin filament binding"/>
    <property type="evidence" value="ECO:0000318"/>
    <property type="project" value="GO_Central"/>
</dbReference>
<dbReference type="GO" id="GO:0005524">
    <property type="term" value="F:ATP binding"/>
    <property type="evidence" value="ECO:0007669"/>
    <property type="project" value="UniProtKB-KW"/>
</dbReference>
<dbReference type="GO" id="GO:0016787">
    <property type="term" value="F:hydrolase activity"/>
    <property type="evidence" value="ECO:0007669"/>
    <property type="project" value="UniProtKB-KW"/>
</dbReference>
<dbReference type="GO" id="GO:0000146">
    <property type="term" value="F:microfilament motor activity"/>
    <property type="evidence" value="ECO:0000318"/>
    <property type="project" value="GO_Central"/>
</dbReference>
<dbReference type="GO" id="GO:0051666">
    <property type="term" value="P:actin cortical patch localization"/>
    <property type="evidence" value="ECO:0000318"/>
    <property type="project" value="GO_Central"/>
</dbReference>
<dbReference type="GO" id="GO:0007015">
    <property type="term" value="P:actin filament organization"/>
    <property type="evidence" value="ECO:0000318"/>
    <property type="project" value="GO_Central"/>
</dbReference>
<dbReference type="GO" id="GO:0006897">
    <property type="term" value="P:endocytosis"/>
    <property type="evidence" value="ECO:0000318"/>
    <property type="project" value="GO_Central"/>
</dbReference>
<dbReference type="CDD" id="cd01378">
    <property type="entry name" value="MYSc_Myo1"/>
    <property type="match status" value="1"/>
</dbReference>
<dbReference type="CDD" id="cd11858">
    <property type="entry name" value="SH3_Myosin-I_fungi"/>
    <property type="match status" value="1"/>
</dbReference>
<dbReference type="FunFam" id="1.10.10.820:FF:000001">
    <property type="entry name" value="Myosin heavy chain"/>
    <property type="match status" value="1"/>
</dbReference>
<dbReference type="FunFam" id="1.20.120.720:FF:000015">
    <property type="entry name" value="Myosin I"/>
    <property type="match status" value="1"/>
</dbReference>
<dbReference type="FunFam" id="2.30.30.40:FF:000254">
    <property type="entry name" value="Myosin I MyoA/Myo5"/>
    <property type="match status" value="1"/>
</dbReference>
<dbReference type="FunFam" id="1.20.5.4820:FF:000004">
    <property type="entry name" value="Myosin IE"/>
    <property type="match status" value="1"/>
</dbReference>
<dbReference type="FunFam" id="1.20.58.530:FF:000007">
    <property type="entry name" value="Myosin IE"/>
    <property type="match status" value="1"/>
</dbReference>
<dbReference type="Gene3D" id="1.10.10.820">
    <property type="match status" value="1"/>
</dbReference>
<dbReference type="Gene3D" id="1.20.5.4820">
    <property type="match status" value="1"/>
</dbReference>
<dbReference type="Gene3D" id="1.20.58.530">
    <property type="match status" value="1"/>
</dbReference>
<dbReference type="Gene3D" id="3.40.850.10">
    <property type="entry name" value="Kinesin motor domain"/>
    <property type="match status" value="1"/>
</dbReference>
<dbReference type="Gene3D" id="1.20.120.720">
    <property type="entry name" value="Myosin VI head, motor domain, U50 subdomain"/>
    <property type="match status" value="1"/>
</dbReference>
<dbReference type="Gene3D" id="2.30.30.40">
    <property type="entry name" value="SH3 Domains"/>
    <property type="match status" value="1"/>
</dbReference>
<dbReference type="InterPro" id="IPR035535">
    <property type="entry name" value="Fungal_myosin-I_SH3"/>
</dbReference>
<dbReference type="InterPro" id="IPR036961">
    <property type="entry name" value="Kinesin_motor_dom_sf"/>
</dbReference>
<dbReference type="InterPro" id="IPR054489">
    <property type="entry name" value="Myo1_CA"/>
</dbReference>
<dbReference type="InterPro" id="IPR001609">
    <property type="entry name" value="Myosin_head_motor_dom-like"/>
</dbReference>
<dbReference type="InterPro" id="IPR010926">
    <property type="entry name" value="Myosin_TH1"/>
</dbReference>
<dbReference type="InterPro" id="IPR036072">
    <property type="entry name" value="MYSc_Myo1"/>
</dbReference>
<dbReference type="InterPro" id="IPR027417">
    <property type="entry name" value="P-loop_NTPase"/>
</dbReference>
<dbReference type="InterPro" id="IPR036028">
    <property type="entry name" value="SH3-like_dom_sf"/>
</dbReference>
<dbReference type="InterPro" id="IPR001452">
    <property type="entry name" value="SH3_domain"/>
</dbReference>
<dbReference type="PANTHER" id="PTHR13140">
    <property type="entry name" value="MYOSIN"/>
    <property type="match status" value="1"/>
</dbReference>
<dbReference type="PANTHER" id="PTHR13140:SF837">
    <property type="entry name" value="MYOSIN-3-RELATED"/>
    <property type="match status" value="1"/>
</dbReference>
<dbReference type="Pfam" id="PF22773">
    <property type="entry name" value="Myo1_CA"/>
    <property type="match status" value="1"/>
</dbReference>
<dbReference type="Pfam" id="PF00063">
    <property type="entry name" value="Myosin_head"/>
    <property type="match status" value="1"/>
</dbReference>
<dbReference type="Pfam" id="PF06017">
    <property type="entry name" value="Myosin_TH1"/>
    <property type="match status" value="1"/>
</dbReference>
<dbReference type="Pfam" id="PF00018">
    <property type="entry name" value="SH3_1"/>
    <property type="match status" value="1"/>
</dbReference>
<dbReference type="PRINTS" id="PR00193">
    <property type="entry name" value="MYOSINHEAVY"/>
</dbReference>
<dbReference type="SMART" id="SM00242">
    <property type="entry name" value="MYSc"/>
    <property type="match status" value="1"/>
</dbReference>
<dbReference type="SMART" id="SM00326">
    <property type="entry name" value="SH3"/>
    <property type="match status" value="1"/>
</dbReference>
<dbReference type="SUPFAM" id="SSF52540">
    <property type="entry name" value="P-loop containing nucleoside triphosphate hydrolases"/>
    <property type="match status" value="1"/>
</dbReference>
<dbReference type="SUPFAM" id="SSF50044">
    <property type="entry name" value="SH3-domain"/>
    <property type="match status" value="1"/>
</dbReference>
<dbReference type="PROSITE" id="PS51456">
    <property type="entry name" value="MYOSIN_MOTOR"/>
    <property type="match status" value="1"/>
</dbReference>
<dbReference type="PROSITE" id="PS50002">
    <property type="entry name" value="SH3"/>
    <property type="match status" value="1"/>
</dbReference>
<dbReference type="PROSITE" id="PS51757">
    <property type="entry name" value="TH1"/>
    <property type="match status" value="1"/>
</dbReference>
<evidence type="ECO:0000250" key="1"/>
<evidence type="ECO:0000255" key="2"/>
<evidence type="ECO:0000255" key="3">
    <source>
        <dbReference type="PROSITE-ProRule" id="PRU00192"/>
    </source>
</evidence>
<evidence type="ECO:0000255" key="4">
    <source>
        <dbReference type="PROSITE-ProRule" id="PRU00782"/>
    </source>
</evidence>
<evidence type="ECO:0000255" key="5">
    <source>
        <dbReference type="PROSITE-ProRule" id="PRU01093"/>
    </source>
</evidence>
<evidence type="ECO:0000256" key="6">
    <source>
        <dbReference type="SAM" id="MobiDB-lite"/>
    </source>
</evidence>
<evidence type="ECO:0000305" key="7"/>